<dbReference type="EC" id="6.3.2.4" evidence="2"/>
<dbReference type="EMBL" id="AE001439">
    <property type="protein sequence ID" value="AAD06259.1"/>
    <property type="molecule type" value="Genomic_DNA"/>
</dbReference>
<dbReference type="PIR" id="A71903">
    <property type="entry name" value="A71903"/>
</dbReference>
<dbReference type="RefSeq" id="WP_010882547.1">
    <property type="nucleotide sequence ID" value="NC_000921.1"/>
</dbReference>
<dbReference type="SMR" id="Q9ZLA5"/>
<dbReference type="KEGG" id="hpj:jhp_0675"/>
<dbReference type="PATRIC" id="fig|85963.30.peg.305"/>
<dbReference type="eggNOG" id="COG1181">
    <property type="taxonomic scope" value="Bacteria"/>
</dbReference>
<dbReference type="UniPathway" id="UPA00219"/>
<dbReference type="Proteomes" id="UP000000804">
    <property type="component" value="Chromosome"/>
</dbReference>
<dbReference type="GO" id="GO:0005737">
    <property type="term" value="C:cytoplasm"/>
    <property type="evidence" value="ECO:0007669"/>
    <property type="project" value="UniProtKB-SubCell"/>
</dbReference>
<dbReference type="GO" id="GO:0005524">
    <property type="term" value="F:ATP binding"/>
    <property type="evidence" value="ECO:0007669"/>
    <property type="project" value="UniProtKB-KW"/>
</dbReference>
<dbReference type="GO" id="GO:0008716">
    <property type="term" value="F:D-alanine-D-alanine ligase activity"/>
    <property type="evidence" value="ECO:0007669"/>
    <property type="project" value="UniProtKB-UniRule"/>
</dbReference>
<dbReference type="GO" id="GO:0046872">
    <property type="term" value="F:metal ion binding"/>
    <property type="evidence" value="ECO:0007669"/>
    <property type="project" value="UniProtKB-KW"/>
</dbReference>
<dbReference type="GO" id="GO:0071555">
    <property type="term" value="P:cell wall organization"/>
    <property type="evidence" value="ECO:0007669"/>
    <property type="project" value="UniProtKB-KW"/>
</dbReference>
<dbReference type="GO" id="GO:0009252">
    <property type="term" value="P:peptidoglycan biosynthetic process"/>
    <property type="evidence" value="ECO:0007669"/>
    <property type="project" value="UniProtKB-UniRule"/>
</dbReference>
<dbReference type="GO" id="GO:0008360">
    <property type="term" value="P:regulation of cell shape"/>
    <property type="evidence" value="ECO:0007669"/>
    <property type="project" value="UniProtKB-KW"/>
</dbReference>
<dbReference type="FunFam" id="3.40.50.20:FF:000040">
    <property type="entry name" value="D-alanine--D-alanine ligase"/>
    <property type="match status" value="1"/>
</dbReference>
<dbReference type="Gene3D" id="3.40.50.20">
    <property type="match status" value="1"/>
</dbReference>
<dbReference type="Gene3D" id="3.30.1490.20">
    <property type="entry name" value="ATP-grasp fold, A domain"/>
    <property type="match status" value="1"/>
</dbReference>
<dbReference type="Gene3D" id="3.30.470.20">
    <property type="entry name" value="ATP-grasp fold, B domain"/>
    <property type="match status" value="1"/>
</dbReference>
<dbReference type="HAMAP" id="MF_00047">
    <property type="entry name" value="Dala_Dala_lig"/>
    <property type="match status" value="1"/>
</dbReference>
<dbReference type="InterPro" id="IPR011761">
    <property type="entry name" value="ATP-grasp"/>
</dbReference>
<dbReference type="InterPro" id="IPR013815">
    <property type="entry name" value="ATP_grasp_subdomain_1"/>
</dbReference>
<dbReference type="InterPro" id="IPR000291">
    <property type="entry name" value="D-Ala_lig_Van_CS"/>
</dbReference>
<dbReference type="InterPro" id="IPR005905">
    <property type="entry name" value="D_ala_D_ala"/>
</dbReference>
<dbReference type="InterPro" id="IPR011095">
    <property type="entry name" value="Dala_Dala_lig_C"/>
</dbReference>
<dbReference type="InterPro" id="IPR011127">
    <property type="entry name" value="Dala_Dala_lig_N"/>
</dbReference>
<dbReference type="InterPro" id="IPR016185">
    <property type="entry name" value="PreATP-grasp_dom_sf"/>
</dbReference>
<dbReference type="NCBIfam" id="TIGR01205">
    <property type="entry name" value="D_ala_D_alaTIGR"/>
    <property type="match status" value="1"/>
</dbReference>
<dbReference type="NCBIfam" id="NF002527">
    <property type="entry name" value="PRK01966.1-3"/>
    <property type="match status" value="1"/>
</dbReference>
<dbReference type="PANTHER" id="PTHR23132">
    <property type="entry name" value="D-ALANINE--D-ALANINE LIGASE"/>
    <property type="match status" value="1"/>
</dbReference>
<dbReference type="PANTHER" id="PTHR23132:SF23">
    <property type="entry name" value="D-ALANINE--D-ALANINE LIGASE B"/>
    <property type="match status" value="1"/>
</dbReference>
<dbReference type="Pfam" id="PF07478">
    <property type="entry name" value="Dala_Dala_lig_C"/>
    <property type="match status" value="1"/>
</dbReference>
<dbReference type="Pfam" id="PF01820">
    <property type="entry name" value="Dala_Dala_lig_N"/>
    <property type="match status" value="1"/>
</dbReference>
<dbReference type="SUPFAM" id="SSF56059">
    <property type="entry name" value="Glutathione synthetase ATP-binding domain-like"/>
    <property type="match status" value="1"/>
</dbReference>
<dbReference type="SUPFAM" id="SSF52440">
    <property type="entry name" value="PreATP-grasp domain"/>
    <property type="match status" value="1"/>
</dbReference>
<dbReference type="PROSITE" id="PS50975">
    <property type="entry name" value="ATP_GRASP"/>
    <property type="match status" value="1"/>
</dbReference>
<dbReference type="PROSITE" id="PS00843">
    <property type="entry name" value="DALA_DALA_LIGASE_1"/>
    <property type="match status" value="1"/>
</dbReference>
<dbReference type="PROSITE" id="PS00844">
    <property type="entry name" value="DALA_DALA_LIGASE_2"/>
    <property type="match status" value="1"/>
</dbReference>
<sequence>MEFCVLFGGASFEHEISIVSAIALKGVLKDRIKYFIFLDENHYFYLIEESNMHSKYFAQIKEKKLPPLILTHNGLLKNSFLGAKIIELPLVINLVHGGDGEDGKLASLLEFYRIAFIGPRVEASVLSYNKYLTKLYAKDLGVKALDYVLLNEKNRANALDLIGFNFPFIVKPSNAGSSLGVNVVKEEKELIYALDSAFEYSKEVLIEPFIQGVKEYNLAGCKIKKGFCFSYVEEPNKQEFLDFKQKYLDFSRTKAPKANLSNALEEQLKENFKKLYNDLFDGAIIRCDFFVIENEVYLNEINPIPGSLANYLFDDFKTTLENLAQSLPKTPKIQVKNSYLLQIQKNK</sequence>
<accession>Q9ZLA5</accession>
<name>DDL_HELPJ</name>
<evidence type="ECO:0000250" key="1"/>
<evidence type="ECO:0000255" key="2">
    <source>
        <dbReference type="HAMAP-Rule" id="MF_00047"/>
    </source>
</evidence>
<comment type="function">
    <text evidence="2">Cell wall formation.</text>
</comment>
<comment type="catalytic activity">
    <reaction evidence="2">
        <text>2 D-alanine + ATP = D-alanyl-D-alanine + ADP + phosphate + H(+)</text>
        <dbReference type="Rhea" id="RHEA:11224"/>
        <dbReference type="ChEBI" id="CHEBI:15378"/>
        <dbReference type="ChEBI" id="CHEBI:30616"/>
        <dbReference type="ChEBI" id="CHEBI:43474"/>
        <dbReference type="ChEBI" id="CHEBI:57416"/>
        <dbReference type="ChEBI" id="CHEBI:57822"/>
        <dbReference type="ChEBI" id="CHEBI:456216"/>
        <dbReference type="EC" id="6.3.2.4"/>
    </reaction>
</comment>
<comment type="cofactor">
    <cofactor evidence="1">
        <name>Mg(2+)</name>
        <dbReference type="ChEBI" id="CHEBI:18420"/>
    </cofactor>
    <cofactor evidence="1">
        <name>Mn(2+)</name>
        <dbReference type="ChEBI" id="CHEBI:29035"/>
    </cofactor>
    <text evidence="1">Binds 2 magnesium or manganese ions per subunit.</text>
</comment>
<comment type="pathway">
    <text evidence="2">Cell wall biogenesis; peptidoglycan biosynthesis.</text>
</comment>
<comment type="subcellular location">
    <subcellularLocation>
        <location evidence="2">Cytoplasm</location>
    </subcellularLocation>
</comment>
<comment type="similarity">
    <text evidence="2">Belongs to the D-alanine--D-alanine ligase family.</text>
</comment>
<reference key="1">
    <citation type="journal article" date="1999" name="Nature">
        <title>Genomic sequence comparison of two unrelated isolates of the human gastric pathogen Helicobacter pylori.</title>
        <authorList>
            <person name="Alm R.A."/>
            <person name="Ling L.-S.L."/>
            <person name="Moir D.T."/>
            <person name="King B.L."/>
            <person name="Brown E.D."/>
            <person name="Doig P.C."/>
            <person name="Smith D.R."/>
            <person name="Noonan B."/>
            <person name="Guild B.C."/>
            <person name="deJonge B.L."/>
            <person name="Carmel G."/>
            <person name="Tummino P.J."/>
            <person name="Caruso A."/>
            <person name="Uria-Nickelsen M."/>
            <person name="Mills D.M."/>
            <person name="Ives C."/>
            <person name="Gibson R."/>
            <person name="Merberg D."/>
            <person name="Mills S.D."/>
            <person name="Jiang Q."/>
            <person name="Taylor D.E."/>
            <person name="Vovis G.F."/>
            <person name="Trust T.J."/>
        </authorList>
    </citation>
    <scope>NUCLEOTIDE SEQUENCE [LARGE SCALE GENOMIC DNA]</scope>
    <source>
        <strain>J99 / ATCC 700824</strain>
    </source>
</reference>
<gene>
    <name evidence="2" type="primary">ddl</name>
    <name type="synonym">ddlA</name>
    <name type="ordered locus">jhp_0675</name>
</gene>
<keyword id="KW-0067">ATP-binding</keyword>
<keyword id="KW-0133">Cell shape</keyword>
<keyword id="KW-0961">Cell wall biogenesis/degradation</keyword>
<keyword id="KW-0963">Cytoplasm</keyword>
<keyword id="KW-0436">Ligase</keyword>
<keyword id="KW-0460">Magnesium</keyword>
<keyword id="KW-0464">Manganese</keyword>
<keyword id="KW-0479">Metal-binding</keyword>
<keyword id="KW-0547">Nucleotide-binding</keyword>
<keyword id="KW-0573">Peptidoglycan synthesis</keyword>
<organism>
    <name type="scientific">Helicobacter pylori (strain J99 / ATCC 700824)</name>
    <name type="common">Campylobacter pylori J99</name>
    <dbReference type="NCBI Taxonomy" id="85963"/>
    <lineage>
        <taxon>Bacteria</taxon>
        <taxon>Pseudomonadati</taxon>
        <taxon>Campylobacterota</taxon>
        <taxon>Epsilonproteobacteria</taxon>
        <taxon>Campylobacterales</taxon>
        <taxon>Helicobacteraceae</taxon>
        <taxon>Helicobacter</taxon>
    </lineage>
</organism>
<feature type="chain" id="PRO_0000177831" description="D-alanine--D-alanine ligase">
    <location>
        <begin position="1"/>
        <end position="347"/>
    </location>
</feature>
<feature type="domain" description="ATP-grasp" evidence="2">
    <location>
        <begin position="134"/>
        <end position="332"/>
    </location>
</feature>
<feature type="binding site" evidence="2">
    <location>
        <begin position="161"/>
        <end position="216"/>
    </location>
    <ligand>
        <name>ATP</name>
        <dbReference type="ChEBI" id="CHEBI:30616"/>
    </ligand>
</feature>
<feature type="binding site" evidence="2">
    <location>
        <position position="288"/>
    </location>
    <ligand>
        <name>Mg(2+)</name>
        <dbReference type="ChEBI" id="CHEBI:18420"/>
        <label>1</label>
    </ligand>
</feature>
<feature type="binding site" evidence="2">
    <location>
        <position position="300"/>
    </location>
    <ligand>
        <name>Mg(2+)</name>
        <dbReference type="ChEBI" id="CHEBI:18420"/>
        <label>1</label>
    </ligand>
</feature>
<feature type="binding site" evidence="2">
    <location>
        <position position="300"/>
    </location>
    <ligand>
        <name>Mg(2+)</name>
        <dbReference type="ChEBI" id="CHEBI:18420"/>
        <label>2</label>
    </ligand>
</feature>
<feature type="binding site" evidence="2">
    <location>
        <position position="302"/>
    </location>
    <ligand>
        <name>Mg(2+)</name>
        <dbReference type="ChEBI" id="CHEBI:18420"/>
        <label>2</label>
    </ligand>
</feature>
<protein>
    <recommendedName>
        <fullName evidence="2">D-alanine--D-alanine ligase</fullName>
        <ecNumber evidence="2">6.3.2.4</ecNumber>
    </recommendedName>
    <alternativeName>
        <fullName evidence="2">D-Ala-D-Ala ligase</fullName>
    </alternativeName>
    <alternativeName>
        <fullName evidence="2">D-alanylalanine synthetase</fullName>
    </alternativeName>
</protein>
<proteinExistence type="inferred from homology"/>